<keyword id="KW-0002">3D-structure</keyword>
<keyword id="KW-0007">Acetylation</keyword>
<keyword id="KW-0025">Alternative splicing</keyword>
<keyword id="KW-0072">Autophagy</keyword>
<keyword id="KW-0963">Cytoplasm</keyword>
<keyword id="KW-0945">Host-virus interaction</keyword>
<keyword id="KW-1017">Isopeptide bond</keyword>
<keyword id="KW-0472">Membrane</keyword>
<keyword id="KW-1267">Proteomics identification</keyword>
<keyword id="KW-1185">Reference proteome</keyword>
<keyword id="KW-0833">Ubl conjugation pathway</keyword>
<organism>
    <name type="scientific">Homo sapiens</name>
    <name type="common">Human</name>
    <dbReference type="NCBI Taxonomy" id="9606"/>
    <lineage>
        <taxon>Eukaryota</taxon>
        <taxon>Metazoa</taxon>
        <taxon>Chordata</taxon>
        <taxon>Craniata</taxon>
        <taxon>Vertebrata</taxon>
        <taxon>Euteleostomi</taxon>
        <taxon>Mammalia</taxon>
        <taxon>Eutheria</taxon>
        <taxon>Euarchontoglires</taxon>
        <taxon>Primates</taxon>
        <taxon>Haplorrhini</taxon>
        <taxon>Catarrhini</taxon>
        <taxon>Hominidae</taxon>
        <taxon>Homo</taxon>
    </lineage>
</organism>
<accession>O94817</accession>
<accession>Q6PJV2</accession>
<reference key="1">
    <citation type="journal article" date="1998" name="J. Biol. Chem.">
        <title>A new protein conjugation system in human. The counterpart of the yeast Apg12p conjugation system essential for autophagy.</title>
        <authorList>
            <person name="Mizushima N."/>
            <person name="Sugita H."/>
            <person name="Yoshimori T."/>
            <person name="Ohsumi Y."/>
        </authorList>
    </citation>
    <scope>NUCLEOTIDE SEQUENCE [MRNA] (ISOFORM 1)</scope>
    <scope>CONJUGATION TO ATG5</scope>
    <scope>TISSUE SPECIFICITY</scope>
</reference>
<reference key="2">
    <citation type="journal article" date="2004" name="Nature">
        <title>The DNA sequence and comparative analysis of human chromosome 5.</title>
        <authorList>
            <person name="Schmutz J."/>
            <person name="Martin J."/>
            <person name="Terry A."/>
            <person name="Couronne O."/>
            <person name="Grimwood J."/>
            <person name="Lowry S."/>
            <person name="Gordon L.A."/>
            <person name="Scott D."/>
            <person name="Xie G."/>
            <person name="Huang W."/>
            <person name="Hellsten U."/>
            <person name="Tran-Gyamfi M."/>
            <person name="She X."/>
            <person name="Prabhakar S."/>
            <person name="Aerts A."/>
            <person name="Altherr M."/>
            <person name="Bajorek E."/>
            <person name="Black S."/>
            <person name="Branscomb E."/>
            <person name="Caoile C."/>
            <person name="Challacombe J.F."/>
            <person name="Chan Y.M."/>
            <person name="Denys M."/>
            <person name="Detter J.C."/>
            <person name="Escobar J."/>
            <person name="Flowers D."/>
            <person name="Fotopulos D."/>
            <person name="Glavina T."/>
            <person name="Gomez M."/>
            <person name="Gonzales E."/>
            <person name="Goodstein D."/>
            <person name="Grigoriev I."/>
            <person name="Groza M."/>
            <person name="Hammon N."/>
            <person name="Hawkins T."/>
            <person name="Haydu L."/>
            <person name="Israni S."/>
            <person name="Jett J."/>
            <person name="Kadner K."/>
            <person name="Kimball H."/>
            <person name="Kobayashi A."/>
            <person name="Lopez F."/>
            <person name="Lou Y."/>
            <person name="Martinez D."/>
            <person name="Medina C."/>
            <person name="Morgan J."/>
            <person name="Nandkeshwar R."/>
            <person name="Noonan J.P."/>
            <person name="Pitluck S."/>
            <person name="Pollard M."/>
            <person name="Predki P."/>
            <person name="Priest J."/>
            <person name="Ramirez L."/>
            <person name="Retterer J."/>
            <person name="Rodriguez A."/>
            <person name="Rogers S."/>
            <person name="Salamov A."/>
            <person name="Salazar A."/>
            <person name="Thayer N."/>
            <person name="Tice H."/>
            <person name="Tsai M."/>
            <person name="Ustaszewska A."/>
            <person name="Vo N."/>
            <person name="Wheeler J."/>
            <person name="Wu K."/>
            <person name="Yang J."/>
            <person name="Dickson M."/>
            <person name="Cheng J.-F."/>
            <person name="Eichler E.E."/>
            <person name="Olsen A."/>
            <person name="Pennacchio L.A."/>
            <person name="Rokhsar D.S."/>
            <person name="Richardson P."/>
            <person name="Lucas S.M."/>
            <person name="Myers R.M."/>
            <person name="Rubin E.M."/>
        </authorList>
    </citation>
    <scope>NUCLEOTIDE SEQUENCE [LARGE SCALE GENOMIC DNA]</scope>
</reference>
<reference key="3">
    <citation type="journal article" date="2004" name="Genome Res.">
        <title>The status, quality, and expansion of the NIH full-length cDNA project: the Mammalian Gene Collection (MGC).</title>
        <authorList>
            <consortium name="The MGC Project Team"/>
        </authorList>
    </citation>
    <scope>NUCLEOTIDE SEQUENCE [LARGE SCALE MRNA] (ISOFORMS 1 AND 2)</scope>
    <source>
        <tissue>Brain</tissue>
        <tissue>Ovary</tissue>
    </source>
</reference>
<reference key="4">
    <citation type="journal article" date="2001" name="J. Biol. Chem.">
        <title>The human homolog of Saccharomyces cerevisiae Apg7p is a Protein-activating enzyme for multiple substrates including human Apg12p, GATE-16, GABARAP, and MAP-LC3.</title>
        <authorList>
            <person name="Tanida I."/>
            <person name="Tanida-Miyake E."/>
            <person name="Ueno T."/>
            <person name="Kominami E."/>
        </authorList>
    </citation>
    <scope>INTERACTION WITH ATG7</scope>
    <scope>CONJUGATION TO ATG5</scope>
</reference>
<reference key="5">
    <citation type="journal article" date="2002" name="Biochem. Biophys. Res. Commun.">
        <title>Mammalian Apg12p, but not the Apg12p.Apg5p conjugate, facilitates LC3 processing.</title>
        <authorList>
            <person name="Tanida I."/>
            <person name="Nishitani T."/>
            <person name="Nemoto T."/>
            <person name="Ueno T."/>
            <person name="Kominami E."/>
        </authorList>
    </citation>
    <scope>INTERACTION WITH ATG3</scope>
    <scope>CONJUGATION TO ATG5</scope>
    <scope>FUNCTION</scope>
</reference>
<reference key="6">
    <citation type="journal article" date="2002" name="J. Biol. Chem.">
        <title>Human Apg3p/Aut1p homologue is an authentic E2 enzyme for multiple substrates, GATE-16, GABARAP, and MAP-LC3, and facilitates the conjugation of hApg12p to hApg5p.</title>
        <authorList>
            <person name="Tanida I."/>
            <person name="Tanida-Miyake E."/>
            <person name="Komatsu M."/>
            <person name="Ueno T."/>
            <person name="Kominami E."/>
        </authorList>
    </citation>
    <scope>INTERACTION WITH ATG3</scope>
    <scope>CONJUGATION TO ATG5</scope>
</reference>
<reference key="7">
    <citation type="journal article" date="2007" name="Autophagy">
        <title>Stimulation of ATG12-ATG5 conjugation by ribonucleic acid.</title>
        <authorList>
            <person name="Shao Y."/>
            <person name="Gao Z."/>
            <person name="Feldman T."/>
            <person name="Jiang X."/>
        </authorList>
    </citation>
    <scope>CONJUGATION TO ATG5</scope>
</reference>
<reference key="8">
    <citation type="journal article" date="2007" name="Autophagy">
        <title>Mitochondrial DNA deletions and chloramphenicol treatment stimulate the autophagic transcript ATG12.</title>
        <authorList>
            <person name="Prigione A."/>
            <person name="Cortopassi G."/>
        </authorList>
    </citation>
    <scope>INDUCTION</scope>
</reference>
<reference key="9">
    <citation type="journal article" date="2007" name="Proc. Natl. Acad. Sci. U.S.A.">
        <title>The Atg5-Atg12 conjugate associates with innate antiviral immune responses.</title>
        <authorList>
            <person name="Jounai N."/>
            <person name="Takeshita F."/>
            <person name="Kobiyama K."/>
            <person name="Sawano A."/>
            <person name="Miyawaki A."/>
            <person name="Xin K.Q."/>
            <person name="Ishii K.J."/>
            <person name="Kawai T."/>
            <person name="Akira S."/>
            <person name="Suzuki K."/>
            <person name="Okuda K."/>
        </authorList>
    </citation>
    <scope>FUNCTION (MICROBIAL INFECTION)</scope>
    <scope>INTERACTION WITH ATG5; IFIH1; DHX58 AND MAVS</scope>
</reference>
<reference key="10">
    <citation type="journal article" date="2008" name="EMBO Rep.">
        <title>The Atg8 and Atg12 ubiquitin-like conjugation systems in macroautophagy. 'Protein modifications: beyond the usual suspects' review series.</title>
        <authorList>
            <person name="Geng J."/>
            <person name="Klionsky D.J."/>
        </authorList>
    </citation>
    <scope>DOMAIN</scope>
</reference>
<reference key="11">
    <citation type="journal article" date="2008" name="Proc. Natl. Acad. Sci. U.S.A.">
        <title>Ubiquitin signals autophagic degradation of cytosolic proteins and peroxisomes.</title>
        <authorList>
            <person name="Kim P.K."/>
            <person name="Hailey D.W."/>
            <person name="Mullen R.T."/>
            <person name="Lippincott-Schwartz J."/>
        </authorList>
    </citation>
    <scope>FUNCTION</scope>
</reference>
<reference key="12">
    <citation type="journal article" date="2008" name="Traffic">
        <title>Induction of autophagy promotes fusion of multivesicular bodies with autophagic vacuoles in k562 cells.</title>
        <authorList>
            <person name="Fader C.M."/>
            <person name="Sanchez D."/>
            <person name="Furlan M."/>
            <person name="Colombo M.I."/>
        </authorList>
    </citation>
    <scope>FUNCTION</scope>
</reference>
<reference key="13">
    <citation type="journal article" date="2009" name="Aging Cell">
        <title>Nicotinamide enhances mitochondria quality through autophagy activation in human cells.</title>
        <authorList>
            <person name="Kang H.T."/>
            <person name="Hwang E.S."/>
        </authorList>
    </citation>
    <scope>INDUCTION</scope>
</reference>
<reference key="14">
    <citation type="journal article" date="2009" name="Autophagy">
        <title>Effect of Helicobacter pylori's vacuolating cytotoxin on the autophagy pathway in gastric epithelial cells.</title>
        <authorList>
            <person name="Terebiznik M.R."/>
            <person name="Raju D."/>
            <person name="Vazquez C.L."/>
            <person name="Torbricki K."/>
            <person name="Kulkarni R."/>
            <person name="Blanke S.R."/>
            <person name="Yoshimori T."/>
            <person name="Colombo M.I."/>
            <person name="Jones N.L."/>
        </authorList>
    </citation>
    <scope>FUNCTION</scope>
</reference>
<reference key="15">
    <citation type="journal article" date="2009" name="J. Biol. Chem.">
        <title>Regulation of autophagy by the p300 acetyltransferase.</title>
        <authorList>
            <person name="Lee I.H."/>
            <person name="Finkel T."/>
        </authorList>
    </citation>
    <scope>ACETYLATION</scope>
</reference>
<reference key="16">
    <citation type="journal article" date="2009" name="Proc. Natl. Acad. Sci. U.S.A.">
        <title>The autophagy machinery is required to initiate hepatitis C virus replication.</title>
        <authorList>
            <person name="Dreux M."/>
            <person name="Gastaminza P."/>
            <person name="Wieland S.F."/>
            <person name="Chisari F.V."/>
        </authorList>
    </citation>
    <scope>FUNCTION (MICROBIAL INFECTION)</scope>
</reference>
<reference key="17">
    <citation type="journal article" date="2011" name="BMC Syst. Biol.">
        <title>Initial characterization of the human central proteome.</title>
        <authorList>
            <person name="Burkard T.R."/>
            <person name="Planyavsky M."/>
            <person name="Kaupe I."/>
            <person name="Breitwieser F.P."/>
            <person name="Buerckstuemmer T."/>
            <person name="Bennett K.L."/>
            <person name="Superti-Furga G."/>
            <person name="Colinge J."/>
        </authorList>
    </citation>
    <scope>IDENTIFICATION BY MASS SPECTROMETRY [LARGE SCALE ANALYSIS]</scope>
</reference>
<reference key="18">
    <citation type="journal article" date="2012" name="Mol. Cell">
        <title>A mammalian autophagosome maturation mechanism mediated by TECPR1 and the Atg12-Atg5 conjugate.</title>
        <authorList>
            <person name="Chen D."/>
            <person name="Fan W."/>
            <person name="Lu Y."/>
            <person name="Ding X."/>
            <person name="Chen S."/>
            <person name="Zhong Q."/>
        </authorList>
    </citation>
    <scope>INTERACTION WITH TECPR1</scope>
    <scope>SUBCELLULAR LOCATION</scope>
</reference>
<reference key="19">
    <citation type="journal article" date="2016" name="Elife">
        <title>Mutation in ATG5 reduces autophagy and leads to ataxia with developmental delay.</title>
        <authorList>
            <person name="Kim M."/>
            <person name="Sandford E."/>
            <person name="Gatica D."/>
            <person name="Qiu Y."/>
            <person name="Liu X."/>
            <person name="Zheng Y."/>
            <person name="Schulman B.A."/>
            <person name="Xu J."/>
            <person name="Semple I."/>
            <person name="Ro S.H."/>
            <person name="Kim B."/>
            <person name="Mavioglu R.N."/>
            <person name="Tolun A."/>
            <person name="Jipa A."/>
            <person name="Takats S."/>
            <person name="Karpati M."/>
            <person name="Li J.Z."/>
            <person name="Yapici Z."/>
            <person name="Juhasz G."/>
            <person name="Lee J.H."/>
            <person name="Klionsky D.J."/>
            <person name="Burmeister M."/>
        </authorList>
    </citation>
    <scope>CONJUGATION TO ATG5</scope>
</reference>
<reference key="20">
    <citation type="journal article" date="2013" name="Nat. Struct. Mol. Biol.">
        <title>Structure of the human ATG12-ATG5 conjugate required for LC3 lipidation in autophagy.</title>
        <authorList>
            <person name="Otomo C."/>
            <person name="Metlagel Z."/>
            <person name="Takaesu G."/>
            <person name="Otomo T."/>
        </authorList>
    </citation>
    <scope>X-RAY CRYSTALLOGRAPHY (2.7 ANGSTROMS) OF 52-140 IN COMPLEX WITH ATG5 AND ATG16L1</scope>
    <scope>INTERACTION WITH ATG3</scope>
    <scope>FUNCTION</scope>
    <scope>MUTAGENESIS OF LYS-54; VAL-62; GLY-63; LYS-72; TRP-73; PHE-108; ASP-113; CYS-122; PHE-123; ALA-138 AND TRP-139</scope>
</reference>
<reference key="21">
    <citation type="journal article" date="2021" name="Autophagy">
        <title>RAB33B recruits the ATG16L1 complex to the phagophore via a noncanonical RAB binding protein.</title>
        <authorList>
            <person name="Pantoom S."/>
            <person name="Konstantinidis G."/>
            <person name="Voss S."/>
            <person name="Han H."/>
            <person name="Hofnagel O."/>
            <person name="Li Z."/>
            <person name="Wu Y.W."/>
        </authorList>
    </citation>
    <scope>INTERACTION WITH ATG16L1 AND RAB33B</scope>
    <scope>CONJUGATION TO ATG15</scope>
</reference>
<reference key="22">
    <citation type="journal article" date="2021" name="Autophagy">
        <title>Adaptor SH3BGRL drives autophagy-mediated chemoresistance through promoting PIK3C3 translation and ATG12 stability in breast cancers.</title>
        <authorList>
            <person name="Zhang S."/>
            <person name="Liu X."/>
            <person name="Abdulmomen Ali Mohammed S."/>
            <person name="Li H."/>
            <person name="Cai W."/>
            <person name="Guan W."/>
            <person name="Liu D."/>
            <person name="Wei Y."/>
            <person name="Rong D."/>
            <person name="Fang Y."/>
            <person name="Haider F."/>
            <person name="Lv H."/>
            <person name="Jin Z."/>
            <person name="Chen X."/>
            <person name="Mo Z."/>
            <person name="Li L."/>
            <person name="Yang S."/>
            <person name="Wang H."/>
        </authorList>
    </citation>
    <scope>INTERACTION WITH SH3BGRL</scope>
</reference>
<reference evidence="26" key="23">
    <citation type="journal article" date="2013" name="Proc. Natl. Acad. Sci. U.S.A.">
        <title>Structural basis of ATG3 recognition by the autophagic ubiquitin-like protein ATG12.</title>
        <authorList>
            <person name="Metlagel Z."/>
            <person name="Otomo C."/>
            <person name="Takaesu G."/>
            <person name="Otomo T."/>
        </authorList>
    </citation>
    <scope>X-RAY CRYSTALLOGRAPHY (2.19 ANGSTROMS) OF 52-140 IN COMPLEX WITH ATG5; ATG3 AND ATG16L1</scope>
</reference>
<dbReference type="EMBL" id="AB017507">
    <property type="protein sequence ID" value="BAA36493.1"/>
    <property type="molecule type" value="mRNA"/>
</dbReference>
<dbReference type="EMBL" id="AC026449">
    <property type="status" value="NOT_ANNOTATED_CDS"/>
    <property type="molecule type" value="Genomic_DNA"/>
</dbReference>
<dbReference type="EMBL" id="BC011033">
    <property type="protein sequence ID" value="AAH11033.1"/>
    <property type="molecule type" value="mRNA"/>
</dbReference>
<dbReference type="EMBL" id="BC012266">
    <property type="protein sequence ID" value="AAH12266.2"/>
    <property type="status" value="ALT_INIT"/>
    <property type="molecule type" value="mRNA"/>
</dbReference>
<dbReference type="CCDS" id="CCDS4122.2">
    <molecule id="O94817-1"/>
</dbReference>
<dbReference type="CCDS" id="CCDS64222.1">
    <molecule id="O94817-4"/>
</dbReference>
<dbReference type="RefSeq" id="NP_001264712.1">
    <molecule id="O94817-4"/>
    <property type="nucleotide sequence ID" value="NM_001277783.2"/>
</dbReference>
<dbReference type="RefSeq" id="NP_004698.3">
    <molecule id="O94817-1"/>
    <property type="nucleotide sequence ID" value="NM_004707.3"/>
</dbReference>
<dbReference type="PDB" id="4GDK">
    <property type="method" value="X-ray"/>
    <property type="resolution" value="2.70 A"/>
    <property type="chains" value="A/D=52-140"/>
</dbReference>
<dbReference type="PDB" id="4GDL">
    <property type="method" value="X-ray"/>
    <property type="resolution" value="2.88 A"/>
    <property type="chains" value="A=52-140"/>
</dbReference>
<dbReference type="PDB" id="4NAW">
    <property type="method" value="X-ray"/>
    <property type="resolution" value="2.20 A"/>
    <property type="chains" value="A/E/I/M=52-140"/>
</dbReference>
<dbReference type="PDBsum" id="4GDK"/>
<dbReference type="PDBsum" id="4GDL"/>
<dbReference type="PDBsum" id="4NAW"/>
<dbReference type="SMR" id="O94817"/>
<dbReference type="BioGRID" id="114587">
    <property type="interactions" value="89"/>
</dbReference>
<dbReference type="ComplexPortal" id="CPX-200">
    <property type="entry name" value="ATG12-ATG5-ATG16L1 complex"/>
</dbReference>
<dbReference type="ComplexPortal" id="CPX-354">
    <property type="entry name" value="ATG12-ATG5-ATG16L2 complex"/>
</dbReference>
<dbReference type="ComplexPortal" id="CPX-356">
    <property type="entry name" value="ATG5-ATG12 complex"/>
</dbReference>
<dbReference type="ComplexPortal" id="CPX-358">
    <property type="entry name" value="ATG5-ATG12-TECPR1 complex"/>
</dbReference>
<dbReference type="DIP" id="DIP-46466N"/>
<dbReference type="FunCoup" id="O94817">
    <property type="interactions" value="3166"/>
</dbReference>
<dbReference type="IntAct" id="O94817">
    <property type="interactions" value="45"/>
</dbReference>
<dbReference type="STRING" id="9606.ENSP00000425107"/>
<dbReference type="TCDB" id="9.A.15.2.1">
    <property type="family name" value="the autophagy-related phagophore-formation transporter (apt) family"/>
</dbReference>
<dbReference type="GlyGen" id="O94817">
    <property type="glycosylation" value="1 site, 1 O-linked glycan (1 site)"/>
</dbReference>
<dbReference type="iPTMnet" id="O94817"/>
<dbReference type="PhosphoSitePlus" id="O94817"/>
<dbReference type="SwissPalm" id="O94817"/>
<dbReference type="BioMuta" id="ATG12"/>
<dbReference type="jPOST" id="O94817"/>
<dbReference type="MassIVE" id="O94817"/>
<dbReference type="PaxDb" id="9606-ENSP00000425107"/>
<dbReference type="PeptideAtlas" id="O94817"/>
<dbReference type="ProteomicsDB" id="50457">
    <molecule id="O94817-1"/>
</dbReference>
<dbReference type="ProteomicsDB" id="50458">
    <molecule id="O94817-4"/>
</dbReference>
<dbReference type="Pumba" id="O94817"/>
<dbReference type="Antibodypedia" id="4593">
    <property type="antibodies" value="773 antibodies from 41 providers"/>
</dbReference>
<dbReference type="DNASU" id="9140"/>
<dbReference type="Ensembl" id="ENST00000500945.2">
    <molecule id="O94817-4"/>
    <property type="protein sequence ID" value="ENSP00000425164.1"/>
    <property type="gene ID" value="ENSG00000145782.13"/>
</dbReference>
<dbReference type="Ensembl" id="ENST00000509910.2">
    <molecule id="O94817-1"/>
    <property type="protein sequence ID" value="ENSP00000425107.1"/>
    <property type="gene ID" value="ENSG00000145782.13"/>
</dbReference>
<dbReference type="GeneID" id="9140"/>
<dbReference type="KEGG" id="hsa:9140"/>
<dbReference type="MANE-Select" id="ENST00000509910.2">
    <property type="protein sequence ID" value="ENSP00000425107.1"/>
    <property type="RefSeq nucleotide sequence ID" value="NM_004707.4"/>
    <property type="RefSeq protein sequence ID" value="NP_004698.3"/>
</dbReference>
<dbReference type="UCSC" id="uc003krh.4">
    <molecule id="O94817-1"/>
    <property type="organism name" value="human"/>
</dbReference>
<dbReference type="AGR" id="HGNC:588"/>
<dbReference type="CTD" id="9140"/>
<dbReference type="DisGeNET" id="9140"/>
<dbReference type="GeneCards" id="ATG12"/>
<dbReference type="HGNC" id="HGNC:588">
    <property type="gene designation" value="ATG12"/>
</dbReference>
<dbReference type="HPA" id="ENSG00000145782">
    <property type="expression patterns" value="Low tissue specificity"/>
</dbReference>
<dbReference type="MIM" id="609608">
    <property type="type" value="gene"/>
</dbReference>
<dbReference type="neXtProt" id="NX_O94817"/>
<dbReference type="OpenTargets" id="ENSG00000145782"/>
<dbReference type="PharmGKB" id="PA24879"/>
<dbReference type="VEuPathDB" id="HostDB:ENSG00000145782"/>
<dbReference type="eggNOG" id="KOG3439">
    <property type="taxonomic scope" value="Eukaryota"/>
</dbReference>
<dbReference type="GeneTree" id="ENSGT00390000016654"/>
<dbReference type="HOGENOM" id="CLU_106795_3_0_1"/>
<dbReference type="InParanoid" id="O94817"/>
<dbReference type="OMA" id="YAKTHAW"/>
<dbReference type="OrthoDB" id="10003551at2759"/>
<dbReference type="PAN-GO" id="O94817">
    <property type="GO annotations" value="6 GO annotations based on evolutionary models"/>
</dbReference>
<dbReference type="PhylomeDB" id="O94817"/>
<dbReference type="TreeFam" id="TF325131"/>
<dbReference type="PathwayCommons" id="O94817"/>
<dbReference type="Reactome" id="R-HSA-1632852">
    <property type="pathway name" value="Macroautophagy"/>
</dbReference>
<dbReference type="Reactome" id="R-HSA-5205685">
    <property type="pathway name" value="PINK1-PRKN Mediated Mitophagy"/>
</dbReference>
<dbReference type="Reactome" id="R-HSA-8934903">
    <property type="pathway name" value="Receptor Mediated Mitophagy"/>
</dbReference>
<dbReference type="Reactome" id="R-HSA-936440">
    <property type="pathway name" value="Negative regulators of DDX58/IFIH1 signaling"/>
</dbReference>
<dbReference type="SignaLink" id="O94817"/>
<dbReference type="SIGNOR" id="O94817"/>
<dbReference type="BioGRID-ORCS" id="9140">
    <property type="hits" value="22 hits in 1164 CRISPR screens"/>
</dbReference>
<dbReference type="ChiTaRS" id="ATG12">
    <property type="organism name" value="human"/>
</dbReference>
<dbReference type="EvolutionaryTrace" id="O94817"/>
<dbReference type="GeneWiki" id="ATG12"/>
<dbReference type="GenomeRNAi" id="9140"/>
<dbReference type="Pharos" id="O94817">
    <property type="development level" value="Tbio"/>
</dbReference>
<dbReference type="PRO" id="PR:O94817"/>
<dbReference type="Proteomes" id="UP000005640">
    <property type="component" value="Chromosome 5"/>
</dbReference>
<dbReference type="RNAct" id="O94817">
    <property type="molecule type" value="protein"/>
</dbReference>
<dbReference type="Bgee" id="ENSG00000145782">
    <property type="expression patterns" value="Expressed in calcaneal tendon and 216 other cell types or tissues"/>
</dbReference>
<dbReference type="ExpressionAtlas" id="O94817">
    <property type="expression patterns" value="baseline and differential"/>
</dbReference>
<dbReference type="GO" id="GO:0034274">
    <property type="term" value="C:Atg12-Atg5-Atg16 complex"/>
    <property type="evidence" value="ECO:0000353"/>
    <property type="project" value="ComplexPortal"/>
</dbReference>
<dbReference type="GO" id="GO:0005776">
    <property type="term" value="C:autophagosome"/>
    <property type="evidence" value="ECO:0000314"/>
    <property type="project" value="MGI"/>
</dbReference>
<dbReference type="GO" id="GO:0000421">
    <property type="term" value="C:autophagosome membrane"/>
    <property type="evidence" value="ECO:0000318"/>
    <property type="project" value="GO_Central"/>
</dbReference>
<dbReference type="GO" id="GO:0005829">
    <property type="term" value="C:cytosol"/>
    <property type="evidence" value="ECO:0000304"/>
    <property type="project" value="Reactome"/>
</dbReference>
<dbReference type="GO" id="GO:0043231">
    <property type="term" value="C:intracellular membrane-bounded organelle"/>
    <property type="evidence" value="ECO:0000314"/>
    <property type="project" value="HPA"/>
</dbReference>
<dbReference type="GO" id="GO:0005654">
    <property type="term" value="C:nucleoplasm"/>
    <property type="evidence" value="ECO:0000314"/>
    <property type="project" value="HPA"/>
</dbReference>
<dbReference type="GO" id="GO:0030670">
    <property type="term" value="C:phagocytic vesicle membrane"/>
    <property type="evidence" value="ECO:0000304"/>
    <property type="project" value="Reactome"/>
</dbReference>
<dbReference type="GO" id="GO:0034045">
    <property type="term" value="C:phagophore assembly site membrane"/>
    <property type="evidence" value="ECO:0000250"/>
    <property type="project" value="UniProtKB"/>
</dbReference>
<dbReference type="GO" id="GO:0032991">
    <property type="term" value="C:protein-containing complex"/>
    <property type="evidence" value="ECO:0000303"/>
    <property type="project" value="ComplexPortal"/>
</dbReference>
<dbReference type="GO" id="GO:1990234">
    <property type="term" value="C:transferase complex"/>
    <property type="evidence" value="ECO:0000266"/>
    <property type="project" value="ComplexPortal"/>
</dbReference>
<dbReference type="GO" id="GO:0031386">
    <property type="term" value="F:protein tag activity"/>
    <property type="evidence" value="ECO:0000318"/>
    <property type="project" value="GO_Central"/>
</dbReference>
<dbReference type="GO" id="GO:0000045">
    <property type="term" value="P:autophagosome assembly"/>
    <property type="evidence" value="ECO:0000250"/>
    <property type="project" value="UniProtKB"/>
</dbReference>
<dbReference type="GO" id="GO:0097352">
    <property type="term" value="P:autophagosome maturation"/>
    <property type="evidence" value="ECO:0000318"/>
    <property type="project" value="GO_Central"/>
</dbReference>
<dbReference type="GO" id="GO:0000422">
    <property type="term" value="P:autophagy of mitochondrion"/>
    <property type="evidence" value="ECO:0000318"/>
    <property type="project" value="GO_Central"/>
</dbReference>
<dbReference type="GO" id="GO:0061723">
    <property type="term" value="P:glycophagy"/>
    <property type="evidence" value="ECO:0000318"/>
    <property type="project" value="GO_Central"/>
</dbReference>
<dbReference type="GO" id="GO:0016236">
    <property type="term" value="P:macroautophagy"/>
    <property type="evidence" value="ECO:0000315"/>
    <property type="project" value="ComplexPortal"/>
</dbReference>
<dbReference type="GO" id="GO:0050687">
    <property type="term" value="P:negative regulation of defense response to virus"/>
    <property type="evidence" value="ECO:0000314"/>
    <property type="project" value="ComplexPortal"/>
</dbReference>
<dbReference type="GO" id="GO:0045824">
    <property type="term" value="P:negative regulation of innate immune response"/>
    <property type="evidence" value="ECO:0000266"/>
    <property type="project" value="ComplexPortal"/>
</dbReference>
<dbReference type="GO" id="GO:0032480">
    <property type="term" value="P:negative regulation of type I interferon production"/>
    <property type="evidence" value="ECO:0000266"/>
    <property type="project" value="ComplexPortal"/>
</dbReference>
<dbReference type="GO" id="GO:0034727">
    <property type="term" value="P:piecemeal microautophagy of the nucleus"/>
    <property type="evidence" value="ECO:0000318"/>
    <property type="project" value="GO_Central"/>
</dbReference>
<dbReference type="GO" id="GO:1904973">
    <property type="term" value="P:positive regulation of viral translation"/>
    <property type="evidence" value="ECO:0000314"/>
    <property type="project" value="ComplexPortal"/>
</dbReference>
<dbReference type="GO" id="GO:1901096">
    <property type="term" value="P:regulation of autophagosome maturation"/>
    <property type="evidence" value="ECO:0000315"/>
    <property type="project" value="ComplexPortal"/>
</dbReference>
<dbReference type="CDD" id="cd01612">
    <property type="entry name" value="Ubl_ATG12"/>
    <property type="match status" value="1"/>
</dbReference>
<dbReference type="FunFam" id="3.10.20.90:FF:000117">
    <property type="entry name" value="Ubiquitin-like protein ATG12"/>
    <property type="match status" value="1"/>
</dbReference>
<dbReference type="Gene3D" id="3.10.20.90">
    <property type="entry name" value="Phosphatidylinositol 3-kinase Catalytic Subunit, Chain A, domain 1"/>
    <property type="match status" value="1"/>
</dbReference>
<dbReference type="InterPro" id="IPR007242">
    <property type="entry name" value="Atg12"/>
</dbReference>
<dbReference type="InterPro" id="IPR029071">
    <property type="entry name" value="Ubiquitin-like_domsf"/>
</dbReference>
<dbReference type="PANTHER" id="PTHR13385">
    <property type="entry name" value="AUTOPHAGY PROTEIN 12"/>
    <property type="match status" value="1"/>
</dbReference>
<dbReference type="PANTHER" id="PTHR13385:SF0">
    <property type="entry name" value="UBIQUITIN-LIKE PROTEIN ATG12"/>
    <property type="match status" value="1"/>
</dbReference>
<dbReference type="Pfam" id="PF04110">
    <property type="entry name" value="APG12"/>
    <property type="match status" value="1"/>
</dbReference>
<dbReference type="SUPFAM" id="SSF54236">
    <property type="entry name" value="Ubiquitin-like"/>
    <property type="match status" value="1"/>
</dbReference>
<protein>
    <recommendedName>
        <fullName evidence="24">Ubiquitin-like protein ATG12</fullName>
    </recommendedName>
    <alternativeName>
        <fullName>Autophagy-related protein 12</fullName>
        <shortName>APG12-like</shortName>
    </alternativeName>
</protein>
<gene>
    <name evidence="25" type="primary">ATG12</name>
    <name type="synonym">APG12</name>
    <name type="synonym">APG12L</name>
</gene>
<sequence length="140" mass="15113">MAEEPQSVLQLPTSIAAGGEGLTDVSPETTTPEPPSSAAVSPGTEEPAGDTKKKIDILLKAVGDTPIMKTKKWAVERTRTIQGLIDFIKKFLKLVASEQLFIYVNQSFAPSPDQEVGTLYECFGSDGKLVLHYCKSQAWG</sequence>
<evidence type="ECO:0000250" key="1"/>
<evidence type="ECO:0000250" key="2">
    <source>
        <dbReference type="UniProtKB" id="Q9CQY1"/>
    </source>
</evidence>
<evidence type="ECO:0000256" key="3">
    <source>
        <dbReference type="SAM" id="MobiDB-lite"/>
    </source>
</evidence>
<evidence type="ECO:0000269" key="4">
    <source>
    </source>
</evidence>
<evidence type="ECO:0000269" key="5">
    <source>
    </source>
</evidence>
<evidence type="ECO:0000269" key="6">
    <source>
    </source>
</evidence>
<evidence type="ECO:0000269" key="7">
    <source>
    </source>
</evidence>
<evidence type="ECO:0000269" key="8">
    <source>
    </source>
</evidence>
<evidence type="ECO:0000269" key="9">
    <source>
    </source>
</evidence>
<evidence type="ECO:0000269" key="10">
    <source>
    </source>
</evidence>
<evidence type="ECO:0000269" key="11">
    <source>
    </source>
</evidence>
<evidence type="ECO:0000269" key="12">
    <source>
    </source>
</evidence>
<evidence type="ECO:0000269" key="13">
    <source>
    </source>
</evidence>
<evidence type="ECO:0000269" key="14">
    <source>
    </source>
</evidence>
<evidence type="ECO:0000269" key="15">
    <source>
    </source>
</evidence>
<evidence type="ECO:0000269" key="16">
    <source>
    </source>
</evidence>
<evidence type="ECO:0000269" key="17">
    <source>
    </source>
</evidence>
<evidence type="ECO:0000269" key="18">
    <source>
    </source>
</evidence>
<evidence type="ECO:0000269" key="19">
    <source>
    </source>
</evidence>
<evidence type="ECO:0000269" key="20">
    <source>
    </source>
</evidence>
<evidence type="ECO:0000269" key="21">
    <source>
    </source>
</evidence>
<evidence type="ECO:0000269" key="22">
    <source>
    </source>
</evidence>
<evidence type="ECO:0000303" key="23">
    <source>
    </source>
</evidence>
<evidence type="ECO:0000305" key="24"/>
<evidence type="ECO:0000312" key="25">
    <source>
        <dbReference type="HGNC" id="HGNC:588"/>
    </source>
</evidence>
<evidence type="ECO:0007744" key="26">
    <source>
        <dbReference type="PDB" id="4NAW"/>
    </source>
</evidence>
<evidence type="ECO:0007829" key="27">
    <source>
        <dbReference type="PDB" id="4GDK"/>
    </source>
</evidence>
<evidence type="ECO:0007829" key="28">
    <source>
        <dbReference type="PDB" id="4NAW"/>
    </source>
</evidence>
<proteinExistence type="evidence at protein level"/>
<feature type="chain" id="PRO_0000212471" description="Ubiquitin-like protein ATG12">
    <location>
        <begin position="1"/>
        <end position="140"/>
    </location>
</feature>
<feature type="region of interest" description="Disordered" evidence="3">
    <location>
        <begin position="1"/>
        <end position="50"/>
    </location>
</feature>
<feature type="compositionally biased region" description="Low complexity" evidence="3">
    <location>
        <begin position="25"/>
        <end position="42"/>
    </location>
</feature>
<feature type="cross-link" description="Glycyl lysine isopeptide (Gly-Lys) (interchain with K-130 in ATG5)" evidence="17">
    <location>
        <position position="140"/>
    </location>
</feature>
<feature type="splice variant" id="VSP_018104" description="In isoform 2." evidence="23">
    <original>DILLKAVGDTPIMKTKKWA</original>
    <variation>YLCESVLCSFPRPRSWNSL</variation>
    <location>
        <begin position="56"/>
        <end position="74"/>
    </location>
</feature>
<feature type="splice variant" id="VSP_018105" description="In isoform 2." evidence="23">
    <location>
        <begin position="75"/>
        <end position="140"/>
    </location>
</feature>
<feature type="mutagenesis site" description="Impairs E3 activity of the ATG12-ATG5 conjugate." evidence="17">
    <original>K</original>
    <variation>D</variation>
    <location>
        <position position="54"/>
    </location>
</feature>
<feature type="mutagenesis site" description="Impairs E3 activity of the ATG12-ATG5 conjugate." evidence="17">
    <original>V</original>
    <variation>R</variation>
    <location>
        <position position="62"/>
    </location>
</feature>
<feature type="mutagenesis site" description="Impairs E3 activity of the ATG12-ATG5 conjugate." evidence="17">
    <original>G</original>
    <variation>D</variation>
    <location>
        <position position="63"/>
    </location>
</feature>
<feature type="mutagenesis site" description="Impairs E3 activity of the ATG12-ATG5 conjugate." evidence="17">
    <original>K</original>
    <variation>D</variation>
    <location>
        <position position="72"/>
    </location>
</feature>
<feature type="mutagenesis site" description="Impairs E3 activity of the ATG12-ATG5 conjugate." evidence="17">
    <original>W</original>
    <variation>A</variation>
    <location>
        <position position="73"/>
    </location>
</feature>
<feature type="mutagenesis site" description="Impairs ATG12 stability." evidence="17">
    <original>F</original>
    <variation>A</variation>
    <variation>D</variation>
    <variation>R</variation>
    <location>
        <position position="108"/>
    </location>
</feature>
<feature type="mutagenesis site" description="Impairs E3 activity of the ATG12-ATG5 conjugate." evidence="17">
    <original>D</original>
    <variation>V</variation>
    <location>
        <position position="113"/>
    </location>
</feature>
<feature type="mutagenesis site" description="Impairs E3 activity of the ATG12-ATG5 conjugate." evidence="17">
    <original>C</original>
    <variation>W</variation>
    <location>
        <position position="122"/>
    </location>
</feature>
<feature type="mutagenesis site" description="Impairs ATG12 stability." evidence="17">
    <original>F</original>
    <variation>D</variation>
    <location>
        <position position="123"/>
    </location>
</feature>
<feature type="mutagenesis site" description="Impairs E3 activity of the ATG12-ATG5 conjugate." evidence="17">
    <original>A</original>
    <variation>R</variation>
    <location>
        <position position="138"/>
    </location>
</feature>
<feature type="mutagenesis site" description="Impairs E3 activity of the ATG12-ATG5 conjugate." evidence="17">
    <original>W</original>
    <variation>F</variation>
    <variation>Y</variation>
    <location>
        <position position="139"/>
    </location>
</feature>
<feature type="strand" evidence="28">
    <location>
        <begin position="55"/>
        <end position="61"/>
    </location>
</feature>
<feature type="strand" evidence="27">
    <location>
        <begin position="63"/>
        <end position="65"/>
    </location>
</feature>
<feature type="strand" evidence="28">
    <location>
        <begin position="72"/>
        <end position="75"/>
    </location>
</feature>
<feature type="helix" evidence="28">
    <location>
        <begin position="81"/>
        <end position="91"/>
    </location>
</feature>
<feature type="strand" evidence="27">
    <location>
        <begin position="96"/>
        <end position="98"/>
    </location>
</feature>
<feature type="strand" evidence="28">
    <location>
        <begin position="101"/>
        <end position="104"/>
    </location>
</feature>
<feature type="turn" evidence="28">
    <location>
        <begin position="105"/>
        <end position="107"/>
    </location>
</feature>
<feature type="helix" evidence="28">
    <location>
        <begin position="116"/>
        <end position="123"/>
    </location>
</feature>
<feature type="strand" evidence="28">
    <location>
        <begin position="128"/>
        <end position="136"/>
    </location>
</feature>
<name>ATG12_HUMAN</name>
<comment type="function">
    <text evidence="2 6 9 11 13 17">Ubiquitin-like protein involved in autophagy vesicles formation. Conjugation with ATG5 through a ubiquitin-like conjugating system involving also ATG7 as an E1-like activating enzyme and ATG10 as an E2-like conjugating enzyme, is essential for its function. The ATG12-ATG5 conjugate acts as an E3-like enzyme which is required for lipidation of ATG8 family proteins and their association to the vesicle membranes. As part of the ATG8 conjugation system with ATG5 and ATG16L1, required for recruitment of LRRK2 to stressed lysosomes and induction of LRRK2 kinase activity in response to lysosomal stress (By similarity).</text>
</comment>
<comment type="function">
    <text evidence="8 15">(Microbial infection) May act as a proviral factor. In association with ATG5, negatively regulates the innate antiviral immune response by impairing the type I IFN production pathway upon vesicular stomatitis virus (VSV) infection (PubMed:17709747). Required for the translation of incoming hepatitis C virus (HCV) RNA and, thereby, for the initiation of HCV replication, but not required once infection is established (PubMed:19666601).</text>
</comment>
<comment type="subunit">
    <text evidence="2 4 5 6 8 16 17 18 19 20 21">Forms a conjugate with ATG5 (PubMed:11096062, PubMed:11825910, PubMed:12207896, PubMed:17709747, PubMed:23202584, PubMed:24191030, PubMed:26812546). Part of the minor complex composed of 4 sets of ATG12-ATG5 and ATG16L1 (400 kDa); this complex interacts with ATG3 leading to disruption of ATG7 interaction and promotion of ATG8-like proteins lipidation (PubMed:23202584, PubMed:24191030). Forms an 800-kDa complex composed of ATG12-ATG5 and ATG16L2 (By similarity). Interacts with DHX58/RIG-1, IFIH1/MDA5 and MAVS/IPS-1 in monomeric form as well as in ATG12-ATG5 conjugate. The interaction with MAVS is further enhanced upon vesicular stomatitis virus (VSV) infection (PubMed:17709747). Interacts with ATG3; this interaction is essential for phosphatidylethanolamine (PE)-conjugated ATG8-like proteins formation (PubMed:11825910, PubMed:12207896, PubMed:23202584, PubMed:24191030). Interacts with ATG7 (PubMed:11096062). Interacts with ATG10 (By similarity). The ATG12-ATG5 conjugate interacts with RAB33A; this interaction is bridged by ATG16L1 and promotes ATG12-ATG5-ATG16L1 complex recruitment to phagophores (PubMed:32960676). Interacts with TECPR1 (PubMed:22342342). Interacts with SH3BGRL (PubMed:34870550). The ATG12-ATG5 conjugate interacts with PDCD6IP (via the BRO1 domain); this interaction is bridged by ATG12 and promotes multiple PDCD6IP-mediated functions such as endolysosomal trafficking, macroautophagy and exosome biogenesis (By similarity).</text>
</comment>
<comment type="interaction">
    <interactant intactId="EBI-746742">
        <id>O94817</id>
    </interactant>
    <interactant intactId="EBI-988094">
        <id>Q9NT62</id>
        <label>ATG3</label>
    </interactant>
    <organismsDiffer>false</organismsDiffer>
    <experiments>9</experiments>
</comment>
<comment type="interaction">
    <interactant intactId="EBI-746742">
        <id>O94817</id>
    </interactant>
    <interactant intactId="EBI-748171">
        <id>O43186</id>
        <label>CRX</label>
    </interactant>
    <organismsDiffer>false</organismsDiffer>
    <experiments>3</experiments>
</comment>
<comment type="interaction">
    <interactant intactId="EBI-746742">
        <id>O94817</id>
    </interactant>
    <interactant intactId="EBI-2806011">
        <id>Q9BTL4</id>
        <label>IER2</label>
    </interactant>
    <organismsDiffer>false</organismsDiffer>
    <experiments>3</experiments>
</comment>
<comment type="interaction">
    <interactant intactId="EBI-746742">
        <id>O94817</id>
    </interactant>
    <interactant intactId="EBI-16439278">
        <id>Q6FHY5</id>
        <label>MEOX2</label>
    </interactant>
    <organismsDiffer>false</organismsDiffer>
    <experiments>3</experiments>
</comment>
<comment type="interaction">
    <interactant intactId="EBI-746742">
        <id>O94817</id>
    </interactant>
    <interactant intactId="EBI-748601">
        <id>Q9UHV2</id>
        <label>SERTAD1</label>
    </interactant>
    <organismsDiffer>false</organismsDiffer>
    <experiments>3</experiments>
</comment>
<comment type="interaction">
    <interactant intactId="EBI-746742">
        <id>O94817</id>
    </interactant>
    <interactant intactId="EBI-2822051">
        <id>Q14140</id>
        <label>SERTAD2</label>
    </interactant>
    <organismsDiffer>false</organismsDiffer>
    <experiments>3</experiments>
</comment>
<comment type="subcellular location">
    <subcellularLocation>
        <location evidence="1">Cytoplasm</location>
    </subcellularLocation>
    <subcellularLocation>
        <location evidence="16">Preautophagosomal structure membrane</location>
        <topology evidence="16">Peripheral membrane protein</topology>
    </subcellularLocation>
    <text>TECPR1 recruits the ATG12-ATG5 conjugate to the autolysosomal membrane.</text>
</comment>
<comment type="alternative products">
    <event type="alternative splicing"/>
    <isoform>
        <id>O94817-1</id>
        <name>1</name>
        <sequence type="displayed"/>
    </isoform>
    <isoform>
        <id>O94817-4</id>
        <name>2</name>
        <sequence type="described" ref="VSP_018104 VSP_018105"/>
    </isoform>
</comment>
<comment type="tissue specificity">
    <text evidence="22">Ubiquitous.</text>
</comment>
<comment type="induction">
    <text evidence="7 14">Expression is induced by mitochondrial DNA deletions, chloramphenicol and nicotinamide.</text>
</comment>
<comment type="domain">
    <text evidence="10">Shares weak sequence similarity with ubiquitin family, but contains an 'ubiquitin superfold' and the C-terminal Gly is required for isopeptide linkage.</text>
</comment>
<comment type="PTM">
    <text evidence="12">Acetylated by EP300.</text>
</comment>
<comment type="miscellaneous">
    <text>Small amount of ATG5-ATG12 conjugate is enough to perform normal autophagy.</text>
</comment>
<comment type="similarity">
    <text evidence="24">Belongs to the ATG12 family.</text>
</comment>
<comment type="sequence caution" evidence="24">
    <conflict type="erroneous initiation">
        <sequence resource="EMBL-CDS" id="AAH12266"/>
    </conflict>
    <text>Extended N-terminus.</text>
</comment>